<reference key="1">
    <citation type="journal article" date="2004" name="Proc. Natl. Acad. Sci. U.S.A.">
        <title>The diploid genome sequence of Candida albicans.</title>
        <authorList>
            <person name="Jones T."/>
            <person name="Federspiel N.A."/>
            <person name="Chibana H."/>
            <person name="Dungan J."/>
            <person name="Kalman S."/>
            <person name="Magee B.B."/>
            <person name="Newport G."/>
            <person name="Thorstenson Y.R."/>
            <person name="Agabian N."/>
            <person name="Magee P.T."/>
            <person name="Davis R.W."/>
            <person name="Scherer S."/>
        </authorList>
    </citation>
    <scope>NUCLEOTIDE SEQUENCE [LARGE SCALE GENOMIC DNA]</scope>
    <source>
        <strain>SC5314 / ATCC MYA-2876</strain>
    </source>
</reference>
<reference key="2">
    <citation type="journal article" date="2007" name="Genome Biol.">
        <title>Assembly of the Candida albicans genome into sixteen supercontigs aligned on the eight chromosomes.</title>
        <authorList>
            <person name="van het Hoog M."/>
            <person name="Rast T.J."/>
            <person name="Martchenko M."/>
            <person name="Grindle S."/>
            <person name="Dignard D."/>
            <person name="Hogues H."/>
            <person name="Cuomo C."/>
            <person name="Berriman M."/>
            <person name="Scherer S."/>
            <person name="Magee B.B."/>
            <person name="Whiteway M."/>
            <person name="Chibana H."/>
            <person name="Nantel A."/>
            <person name="Magee P.T."/>
        </authorList>
    </citation>
    <scope>GENOME REANNOTATION</scope>
    <source>
        <strain>SC5314 / ATCC MYA-2876</strain>
    </source>
</reference>
<reference key="3">
    <citation type="journal article" date="2013" name="Genome Biol.">
        <title>Assembly of a phased diploid Candida albicans genome facilitates allele-specific measurements and provides a simple model for repeat and indel structure.</title>
        <authorList>
            <person name="Muzzey D."/>
            <person name="Schwartz K."/>
            <person name="Weissman J.S."/>
            <person name="Sherlock G."/>
        </authorList>
    </citation>
    <scope>NUCLEOTIDE SEQUENCE [LARGE SCALE GENOMIC DNA]</scope>
    <scope>GENOME REANNOTATION</scope>
    <source>
        <strain>SC5314 / ATCC MYA-2876</strain>
    </source>
</reference>
<keyword id="KW-0469">Meiosis</keyword>
<keyword id="KW-1185">Reference proteome</keyword>
<keyword id="KW-0732">Signal</keyword>
<organism>
    <name type="scientific">Candida albicans (strain SC5314 / ATCC MYA-2876)</name>
    <name type="common">Yeast</name>
    <dbReference type="NCBI Taxonomy" id="237561"/>
    <lineage>
        <taxon>Eukaryota</taxon>
        <taxon>Fungi</taxon>
        <taxon>Dikarya</taxon>
        <taxon>Ascomycota</taxon>
        <taxon>Saccharomycotina</taxon>
        <taxon>Pichiomycetes</taxon>
        <taxon>Debaryomycetaceae</taxon>
        <taxon>Candida/Lodderomyces clade</taxon>
        <taxon>Candida</taxon>
    </lineage>
</organism>
<feature type="signal peptide" evidence="2">
    <location>
        <begin position="1"/>
        <end position="21"/>
    </location>
</feature>
<feature type="chain" id="PRO_0000301796" description="Nitrogen permease regulator 3">
    <location>
        <begin position="22"/>
        <end position="715"/>
    </location>
</feature>
<feature type="region of interest" description="Disordered" evidence="3">
    <location>
        <begin position="104"/>
        <end position="149"/>
    </location>
</feature>
<feature type="region of interest" description="Disordered" evidence="3">
    <location>
        <begin position="562"/>
        <end position="621"/>
    </location>
</feature>
<feature type="compositionally biased region" description="Basic and acidic residues" evidence="3">
    <location>
        <begin position="114"/>
        <end position="124"/>
    </location>
</feature>
<feature type="compositionally biased region" description="Low complexity" evidence="3">
    <location>
        <begin position="126"/>
        <end position="148"/>
    </location>
</feature>
<feature type="compositionally biased region" description="Polar residues" evidence="3">
    <location>
        <begin position="569"/>
        <end position="582"/>
    </location>
</feature>
<feature type="compositionally biased region" description="Basic and acidic residues" evidence="3">
    <location>
        <begin position="610"/>
        <end position="621"/>
    </location>
</feature>
<accession>Q5A319</accession>
<accession>A0A1D8PTU8</accession>
<comment type="function">
    <text evidence="1">Mediates inactivation of the TORC1 complex in response to amino acid starvation. Required for meiotic nuclear division (By similarity).</text>
</comment>
<comment type="similarity">
    <text evidence="4">Belongs to the NPR3 family.</text>
</comment>
<gene>
    <name type="primary">NPR3</name>
    <name type="synonym">RMD11</name>
    <name type="ordered locus">CAALFM_CR08680CA</name>
    <name type="ORF">CaO19.13802</name>
    <name type="ORF">CaO19.6444</name>
</gene>
<sequence length="715" mass="81904">MSLNLPNPSLIGILLVISTHSGPQLIYKYPFDLSNDPSRDESKYALDDNEDDELYDHEESEDENEVNENEMYGVNSRNWDSKHIDYYMGTKSDLLKFLDEQDSRRRKITTTSPSEEKHTKEKHGLTKTISKSSTMASSSTTSPPESSIQGEIFGTDAAYICEMLAPPKQMCNTRFEMTIQDKLFLGLPVHRSDNGQWRSIGHNNEHDEEETHTAKNSLNMFHLVFVMNPPVIESNYRVDEMFHYVISRLSLVLRYEQQKHDYVSQQVKNILALRESLEGNESLLTEKSSLSRVIRDCFEGISTSTIANLSINGKLRSFQIPIKTEFHSLPDPSVPFLPASYLSSTVELLGDTSFINVGETSRYGHAFNSVQDEENSAEKIIVYFALLLLDDPESIIKDMKTETDSTLAKFIRMIEPTESLLKLSARNSKLDISQIKDFAFHLIYWRRARVILPLSSRSVYIVSPMAPITIKLYDDISFFNRRFPTLPSLPHFLKLLSPQSRKPQQFATVIPSKDHRDRYLQALGWLIKHGYVTQLQTFIWLKISRKIKIKVEEDIENENLAKKKKKQKNGSVTVATANSSKTEAPIMPTDNTSKQVSDSKDSDKPEDDEYASKPRLDGLHEHIDGTPIVTLVQGDDTIILDPGRATTLERRWINKIIYEECKLSPELTAVFYKLLKYMNGKNSLELLLLKENISRSELRKLLLSIEEHIISVRHW</sequence>
<protein>
    <recommendedName>
        <fullName>Nitrogen permease regulator 3</fullName>
    </recommendedName>
    <alternativeName>
        <fullName>Required for meiotic nuclear division protein 11</fullName>
    </alternativeName>
</protein>
<proteinExistence type="inferred from homology"/>
<name>NPR3_CANAL</name>
<dbReference type="EMBL" id="CP017630">
    <property type="protein sequence ID" value="AOW31547.1"/>
    <property type="molecule type" value="Genomic_DNA"/>
</dbReference>
<dbReference type="RefSeq" id="XP_716281.1">
    <property type="nucleotide sequence ID" value="XM_711188.1"/>
</dbReference>
<dbReference type="SMR" id="Q5A319"/>
<dbReference type="FunCoup" id="Q5A319">
    <property type="interactions" value="119"/>
</dbReference>
<dbReference type="STRING" id="237561.Q5A319"/>
<dbReference type="EnsemblFungi" id="CR_08680C_A-T">
    <property type="protein sequence ID" value="CR_08680C_A-T-p1"/>
    <property type="gene ID" value="CR_08680C_A"/>
</dbReference>
<dbReference type="GeneID" id="3642127"/>
<dbReference type="KEGG" id="cal:CAALFM_CR08680CA"/>
<dbReference type="CGD" id="CAL0000182919">
    <property type="gene designation" value="orf19.13802"/>
</dbReference>
<dbReference type="VEuPathDB" id="FungiDB:CR_08680C_A"/>
<dbReference type="eggNOG" id="ENOG502QW35">
    <property type="taxonomic scope" value="Eukaryota"/>
</dbReference>
<dbReference type="HOGENOM" id="CLU_014314_0_0_1"/>
<dbReference type="InParanoid" id="Q5A319"/>
<dbReference type="OMA" id="CNLAFRY"/>
<dbReference type="OrthoDB" id="18648at2759"/>
<dbReference type="PRO" id="PR:Q5A319"/>
<dbReference type="Proteomes" id="UP000000559">
    <property type="component" value="Chromosome R"/>
</dbReference>
<dbReference type="GO" id="GO:1990130">
    <property type="term" value="C:GATOR1 complex"/>
    <property type="evidence" value="ECO:0000318"/>
    <property type="project" value="GO_Central"/>
</dbReference>
<dbReference type="GO" id="GO:0034198">
    <property type="term" value="P:cellular response to amino acid starvation"/>
    <property type="evidence" value="ECO:0000318"/>
    <property type="project" value="GO_Central"/>
</dbReference>
<dbReference type="GO" id="GO:0051321">
    <property type="term" value="P:meiotic cell cycle"/>
    <property type="evidence" value="ECO:0007669"/>
    <property type="project" value="UniProtKB-KW"/>
</dbReference>
<dbReference type="GO" id="GO:1904262">
    <property type="term" value="P:negative regulation of TORC1 signaling"/>
    <property type="evidence" value="ECO:0000318"/>
    <property type="project" value="GO_Central"/>
</dbReference>
<dbReference type="GO" id="GO:0010508">
    <property type="term" value="P:positive regulation of autophagy"/>
    <property type="evidence" value="ECO:0000318"/>
    <property type="project" value="GO_Central"/>
</dbReference>
<dbReference type="InterPro" id="IPR056603">
    <property type="entry name" value="HTH_NPRL3"/>
</dbReference>
<dbReference type="InterPro" id="IPR005365">
    <property type="entry name" value="Npr3"/>
</dbReference>
<dbReference type="PANTHER" id="PTHR13153">
    <property type="entry name" value="CGTHBA PROTEIN -14 GENE PROTEIN"/>
    <property type="match status" value="1"/>
</dbReference>
<dbReference type="PANTHER" id="PTHR13153:SF5">
    <property type="entry name" value="GATOR COMPLEX PROTEIN NPRL3"/>
    <property type="match status" value="1"/>
</dbReference>
<dbReference type="Pfam" id="PF24064">
    <property type="entry name" value="HTH_NPRL3"/>
    <property type="match status" value="1"/>
</dbReference>
<dbReference type="Pfam" id="PF03666">
    <property type="entry name" value="NPR3"/>
    <property type="match status" value="1"/>
</dbReference>
<evidence type="ECO:0000250" key="1"/>
<evidence type="ECO:0000255" key="2"/>
<evidence type="ECO:0000256" key="3">
    <source>
        <dbReference type="SAM" id="MobiDB-lite"/>
    </source>
</evidence>
<evidence type="ECO:0000305" key="4"/>